<keyword id="KW-0002">3D-structure</keyword>
<keyword id="KW-0749">Sporulation</keyword>
<keyword id="KW-0800">Toxin</keyword>
<keyword id="KW-0843">Virulence</keyword>
<proteinExistence type="evidence at protein level"/>
<organism>
    <name type="scientific">Bacillus thuringiensis subsp. san diego</name>
    <dbReference type="NCBI Taxonomy" id="1435"/>
    <lineage>
        <taxon>Bacteria</taxon>
        <taxon>Bacillati</taxon>
        <taxon>Bacillota</taxon>
        <taxon>Bacilli</taxon>
        <taxon>Bacillales</taxon>
        <taxon>Bacillaceae</taxon>
        <taxon>Bacillus</taxon>
        <taxon>Bacillus cereus group</taxon>
    </lineage>
</organism>
<sequence>MNPNNRSEHDTIKTTENNEVPTNHVQYPLAETPNPTLEDLNYKEFLRMTADNNTEALDSSTTKDVIQKGISVVGDLLGVVGFPFGGALVSFYTNFLNTIWPSEDPWKAFMEQVEALMDQKIADYAKNKALAELQGLQNNVEDYVSALSSWQKNPVSSRNPHSQGRIRELFSQAESHFRNSMPSFAISGYEVLFLTTYAQAANTHLFLLKDAQIYGEEWGYEKEDIAEFYKRQLKLTQEYTDHCVKWYNVGLDKLRGSSYESWVNFNRYRREMTLTVLDLIALFPLYDVRLYPKEVKTELTRDVLTDPIVGVNNLRGYGTTFSNIENYIRKPHLFDYLHRIQFHTRFQPGYYGNDSFNYWSGNYVSTRPSIGSNDIITSPFYGNKSSEPVQNLEFNGEKVYRAVANTNLAVWPSAVYSGVTKVEFSQYNDQTDEASTQTYDSKRNVGAVSWDSIDQLPPETTDEPLEKGYSHQLNYVMCFLMQGSRGTIPVLTWTHKSVDFFNMIDSKKITQLPLVKAYKLQSGASVVAGPRFTGGDIIQCTENGSAATIYVTPDVSYSQKYRARIHYASTSQITFTLSLDGAPFNQYYFDKTINKGDTLTYNSFNLASFSTPFELSGNNLQIGVTGLSAGDKVYIDKIEFIPVN</sequence>
<feature type="propeptide" id="PRO_0000006341" description="Removed in mature form">
    <location>
        <begin position="1"/>
        <end position="57"/>
    </location>
</feature>
<feature type="chain" id="PRO_0000006342" description="Pesticidal crystal protein Cry3Aa">
    <location>
        <begin position="58"/>
        <end position="644"/>
    </location>
</feature>
<feature type="region of interest" description="Disordered" evidence="1">
    <location>
        <begin position="1"/>
        <end position="20"/>
    </location>
</feature>
<feature type="compositionally biased region" description="Basic and acidic residues" evidence="1">
    <location>
        <begin position="1"/>
        <end position="13"/>
    </location>
</feature>
<feature type="helix" evidence="3">
    <location>
        <begin position="64"/>
        <end position="78"/>
    </location>
</feature>
<feature type="helix" evidence="3">
    <location>
        <begin position="85"/>
        <end position="98"/>
    </location>
</feature>
<feature type="strand" evidence="3">
    <location>
        <begin position="100"/>
        <end position="103"/>
    </location>
</feature>
<feature type="helix" evidence="3">
    <location>
        <begin position="104"/>
        <end position="116"/>
    </location>
</feature>
<feature type="helix" evidence="3">
    <location>
        <begin position="123"/>
        <end position="152"/>
    </location>
</feature>
<feature type="turn" evidence="3">
    <location>
        <begin position="155"/>
        <end position="157"/>
    </location>
</feature>
<feature type="helix" evidence="3">
    <location>
        <begin position="160"/>
        <end position="180"/>
    </location>
</feature>
<feature type="helix" evidence="3">
    <location>
        <begin position="181"/>
        <end position="184"/>
    </location>
</feature>
<feature type="turn" evidence="3">
    <location>
        <begin position="190"/>
        <end position="193"/>
    </location>
</feature>
<feature type="helix" evidence="3">
    <location>
        <begin position="194"/>
        <end position="214"/>
    </location>
</feature>
<feature type="turn" evidence="3">
    <location>
        <begin position="215"/>
        <end position="219"/>
    </location>
</feature>
<feature type="helix" evidence="3">
    <location>
        <begin position="222"/>
        <end position="252"/>
    </location>
</feature>
<feature type="helix" evidence="3">
    <location>
        <begin position="259"/>
        <end position="275"/>
    </location>
</feature>
<feature type="helix" evidence="3">
    <location>
        <begin position="277"/>
        <end position="280"/>
    </location>
</feature>
<feature type="helix" evidence="3">
    <location>
        <begin position="281"/>
        <end position="285"/>
    </location>
</feature>
<feature type="turn" evidence="3">
    <location>
        <begin position="288"/>
        <end position="290"/>
    </location>
</feature>
<feature type="strand" evidence="3">
    <location>
        <begin position="293"/>
        <end position="296"/>
    </location>
</feature>
<feature type="strand" evidence="3">
    <location>
        <begin position="302"/>
        <end position="304"/>
    </location>
</feature>
<feature type="strand" evidence="3">
    <location>
        <begin position="310"/>
        <end position="312"/>
    </location>
</feature>
<feature type="helix" evidence="3">
    <location>
        <begin position="321"/>
        <end position="325"/>
    </location>
</feature>
<feature type="strand" evidence="3">
    <location>
        <begin position="335"/>
        <end position="347"/>
    </location>
</feature>
<feature type="strand" evidence="3">
    <location>
        <begin position="350"/>
        <end position="352"/>
    </location>
</feature>
<feature type="strand" evidence="3">
    <location>
        <begin position="356"/>
        <end position="371"/>
    </location>
</feature>
<feature type="strand" evidence="3">
    <location>
        <begin position="390"/>
        <end position="393"/>
    </location>
</feature>
<feature type="strand" evidence="3">
    <location>
        <begin position="398"/>
        <end position="411"/>
    </location>
</feature>
<feature type="strand" evidence="3">
    <location>
        <begin position="414"/>
        <end position="428"/>
    </location>
</feature>
<feature type="turn" evidence="3">
    <location>
        <begin position="429"/>
        <end position="432"/>
    </location>
</feature>
<feature type="strand" evidence="3">
    <location>
        <begin position="433"/>
        <end position="440"/>
    </location>
</feature>
<feature type="strand" evidence="3">
    <location>
        <begin position="448"/>
        <end position="451"/>
    </location>
</feature>
<feature type="helix" evidence="3">
    <location>
        <begin position="452"/>
        <end position="455"/>
    </location>
</feature>
<feature type="strand" evidence="3">
    <location>
        <begin position="461"/>
        <end position="463"/>
    </location>
</feature>
<feature type="helix" evidence="3">
    <location>
        <begin position="465"/>
        <end position="468"/>
    </location>
</feature>
<feature type="strand" evidence="3">
    <location>
        <begin position="471"/>
        <end position="480"/>
    </location>
</feature>
<feature type="helix" evidence="3">
    <location>
        <begin position="482"/>
        <end position="484"/>
    </location>
</feature>
<feature type="strand" evidence="3">
    <location>
        <begin position="487"/>
        <end position="495"/>
    </location>
</feature>
<feature type="strand" evidence="3">
    <location>
        <begin position="506"/>
        <end position="513"/>
    </location>
</feature>
<feature type="helix" evidence="3">
    <location>
        <begin position="514"/>
        <end position="516"/>
    </location>
</feature>
<feature type="strand" evidence="3">
    <location>
        <begin position="518"/>
        <end position="520"/>
    </location>
</feature>
<feature type="strand" evidence="3">
    <location>
        <begin position="525"/>
        <end position="527"/>
    </location>
</feature>
<feature type="strand" evidence="3">
    <location>
        <begin position="531"/>
        <end position="535"/>
    </location>
</feature>
<feature type="strand" evidence="3">
    <location>
        <begin position="537"/>
        <end position="540"/>
    </location>
</feature>
<feature type="strand" evidence="3">
    <location>
        <begin position="542"/>
        <end position="550"/>
    </location>
</feature>
<feature type="strand" evidence="3">
    <location>
        <begin position="552"/>
        <end position="554"/>
    </location>
</feature>
<feature type="strand" evidence="3">
    <location>
        <begin position="560"/>
        <end position="571"/>
    </location>
</feature>
<feature type="strand" evidence="3">
    <location>
        <begin position="573"/>
        <end position="579"/>
    </location>
</feature>
<feature type="strand" evidence="3">
    <location>
        <begin position="582"/>
        <end position="589"/>
    </location>
</feature>
<feature type="helix" evidence="3">
    <location>
        <begin position="601"/>
        <end position="603"/>
    </location>
</feature>
<feature type="strand" evidence="3">
    <location>
        <begin position="605"/>
        <end position="608"/>
    </location>
</feature>
<feature type="strand" evidence="3">
    <location>
        <begin position="618"/>
        <end position="625"/>
    </location>
</feature>
<feature type="strand" evidence="3">
    <location>
        <begin position="633"/>
        <end position="643"/>
    </location>
</feature>
<evidence type="ECO:0000256" key="1">
    <source>
        <dbReference type="SAM" id="MobiDB-lite"/>
    </source>
</evidence>
<evidence type="ECO:0000305" key="2"/>
<evidence type="ECO:0007829" key="3">
    <source>
        <dbReference type="PDB" id="6LFP"/>
    </source>
</evidence>
<accession>P0A381</accession>
<accession>P07130</accession>
<accession>P21255</accession>
<gene>
    <name type="primary">cry3Aa</name>
    <name type="synonym">bt13</name>
    <name type="synonym">cry3A</name>
    <name type="synonym">cryC</name>
    <name type="synonym">cryIIIa</name>
    <name type="synonym">cryIIIA(a)</name>
</gene>
<reference key="1">
    <citation type="journal article" date="1987" name="Gene">
        <title>Nucleotide sequence and deduced amino acid sequence of a coleopteran-active delta-endotoxin gene from Bacillus thuringiensis subsp. san diego.</title>
        <authorList>
            <person name="Herrnstadt C."/>
            <person name="Gilroy T.E."/>
            <person name="Sobieski D.A."/>
            <person name="Bennett B.D."/>
            <person name="Gaertner F.H."/>
        </authorList>
    </citation>
    <scope>NUCLEOTIDE SEQUENCE [GENOMIC DNA]</scope>
</reference>
<dbReference type="EMBL" id="M22472">
    <property type="protein sequence ID" value="AAA22336.1"/>
    <property type="status" value="ALT_INIT"/>
    <property type="molecule type" value="Genomic_DNA"/>
</dbReference>
<dbReference type="PDB" id="6LFP">
    <property type="method" value="X-ray"/>
    <property type="resolution" value="3.31 A"/>
    <property type="chains" value="A=1-644"/>
</dbReference>
<dbReference type="PDBsum" id="6LFP"/>
<dbReference type="SMR" id="P0A381"/>
<dbReference type="GO" id="GO:0005102">
    <property type="term" value="F:signaling receptor binding"/>
    <property type="evidence" value="ECO:0007669"/>
    <property type="project" value="InterPro"/>
</dbReference>
<dbReference type="GO" id="GO:0090729">
    <property type="term" value="F:toxin activity"/>
    <property type="evidence" value="ECO:0007669"/>
    <property type="project" value="UniProtKB-KW"/>
</dbReference>
<dbReference type="GO" id="GO:0030435">
    <property type="term" value="P:sporulation resulting in formation of a cellular spore"/>
    <property type="evidence" value="ECO:0007669"/>
    <property type="project" value="UniProtKB-KW"/>
</dbReference>
<dbReference type="GO" id="GO:0001907">
    <property type="term" value="P:symbiont-mediated killing of host cell"/>
    <property type="evidence" value="ECO:0007669"/>
    <property type="project" value="InterPro"/>
</dbReference>
<dbReference type="CDD" id="cd04085">
    <property type="entry name" value="delta_endotoxin_C"/>
    <property type="match status" value="1"/>
</dbReference>
<dbReference type="Gene3D" id="2.60.120.260">
    <property type="entry name" value="Galactose-binding domain-like"/>
    <property type="match status" value="1"/>
</dbReference>
<dbReference type="Gene3D" id="2.100.10.10">
    <property type="entry name" value="Pesticidal crystal protein, central domain"/>
    <property type="match status" value="1"/>
</dbReference>
<dbReference type="Gene3D" id="1.20.190.10">
    <property type="entry name" value="Pesticidal crystal protein, N-terminal domain"/>
    <property type="match status" value="1"/>
</dbReference>
<dbReference type="InterPro" id="IPR008979">
    <property type="entry name" value="Galactose-bd-like_sf"/>
</dbReference>
<dbReference type="InterPro" id="IPR038979">
    <property type="entry name" value="Pest_crys"/>
</dbReference>
<dbReference type="InterPro" id="IPR005638">
    <property type="entry name" value="Pest_crys_dom-III"/>
</dbReference>
<dbReference type="InterPro" id="IPR005639">
    <property type="entry name" value="Pest_crys_dom_I"/>
</dbReference>
<dbReference type="InterPro" id="IPR036716">
    <property type="entry name" value="Pest_crys_N_sf"/>
</dbReference>
<dbReference type="InterPro" id="IPR036399">
    <property type="entry name" value="Pest_cryst_cen_dom_sf"/>
</dbReference>
<dbReference type="InterPro" id="IPR001178">
    <property type="entry name" value="Pest_cryst_dom_II"/>
</dbReference>
<dbReference type="PANTHER" id="PTHR37003">
    <property type="entry name" value="ENDOTOXIN_N DOMAIN-CONTAINING PROTEIN-RELATED"/>
    <property type="match status" value="1"/>
</dbReference>
<dbReference type="PANTHER" id="PTHR37003:SF2">
    <property type="entry name" value="PESTICIDAL CRYSTAL PROTEIN N-TERMINAL DOMAIN-CONTAINING PROTEIN"/>
    <property type="match status" value="1"/>
</dbReference>
<dbReference type="Pfam" id="PF03944">
    <property type="entry name" value="Endotoxin_C"/>
    <property type="match status" value="1"/>
</dbReference>
<dbReference type="Pfam" id="PF00555">
    <property type="entry name" value="Endotoxin_M"/>
    <property type="match status" value="1"/>
</dbReference>
<dbReference type="Pfam" id="PF03945">
    <property type="entry name" value="Endotoxin_N"/>
    <property type="match status" value="1"/>
</dbReference>
<dbReference type="SUPFAM" id="SSF51096">
    <property type="entry name" value="delta-Endotoxin (insectocide), middle domain"/>
    <property type="match status" value="1"/>
</dbReference>
<dbReference type="SUPFAM" id="SSF56849">
    <property type="entry name" value="delta-Endotoxin (insectocide), N-terminal domain"/>
    <property type="match status" value="1"/>
</dbReference>
<dbReference type="SUPFAM" id="SSF49785">
    <property type="entry name" value="Galactose-binding domain-like"/>
    <property type="match status" value="1"/>
</dbReference>
<name>CR3AA_BACTD</name>
<protein>
    <recommendedName>
        <fullName>Pesticidal crystal protein Cry3Aa</fullName>
    </recommendedName>
    <alternativeName>
        <fullName>73 kDa crystal protein</fullName>
    </alternativeName>
    <alternativeName>
        <fullName>Crystaline entomocidal protoxin</fullName>
    </alternativeName>
    <alternativeName>
        <fullName>Insecticidal delta-endotoxin CryIIIA(a)</fullName>
    </alternativeName>
</protein>
<comment type="function">
    <text>Promotes colloidosmotic lysis by binding to the midgut epithelial cells of Coleoptera.</text>
</comment>
<comment type="developmental stage">
    <text>The crystal protein is produced during sporulation and is accumulated both as an inclusion and as part of the spore coat.</text>
</comment>
<comment type="miscellaneous">
    <text>Toxic segment of the protein is located in the N-terminus.</text>
</comment>
<comment type="similarity">
    <text evidence="2">Belongs to the delta endotoxin family.</text>
</comment>
<comment type="sequence caution" evidence="2">
    <conflict type="erroneous initiation">
        <sequence resource="EMBL-CDS" id="AAA22336"/>
    </conflict>
</comment>